<reference key="1">
    <citation type="journal article" date="1998" name="EMBO J.">
        <title>Saccharomyces cerevisiae LIF1: a function involved in DNA double-strand break repair related to mammalian XRCC4.</title>
        <authorList>
            <person name="Herrmann G."/>
            <person name="Lindahl T."/>
            <person name="Schar P."/>
        </authorList>
    </citation>
    <scope>NUCLEOTIDE SEQUENCE [GENOMIC DNA]</scope>
    <scope>FUNCTION</scope>
    <scope>INTERACTION WITH DNL4</scope>
</reference>
<reference key="2">
    <citation type="journal article" date="1997" name="Yeast">
        <title>Sequence analysis of 203 kilobases from Saccharomyces cerevisiae chromosome VII.</title>
        <authorList>
            <person name="Rieger M."/>
            <person name="Brueckner M."/>
            <person name="Schaefer M."/>
            <person name="Mueller-Auer S."/>
        </authorList>
    </citation>
    <scope>NUCLEOTIDE SEQUENCE [GENOMIC DNA]</scope>
    <source>
        <strain>ATCC 204508 / S288c</strain>
    </source>
</reference>
<reference key="3">
    <citation type="journal article" date="1997" name="Nature">
        <title>The nucleotide sequence of Saccharomyces cerevisiae chromosome VII.</title>
        <authorList>
            <person name="Tettelin H."/>
            <person name="Agostoni-Carbone M.L."/>
            <person name="Albermann K."/>
            <person name="Albers M."/>
            <person name="Arroyo J."/>
            <person name="Backes U."/>
            <person name="Barreiros T."/>
            <person name="Bertani I."/>
            <person name="Bjourson A.J."/>
            <person name="Brueckner M."/>
            <person name="Bruschi C.V."/>
            <person name="Carignani G."/>
            <person name="Castagnoli L."/>
            <person name="Cerdan E."/>
            <person name="Clemente M.L."/>
            <person name="Coblenz A."/>
            <person name="Coglievina M."/>
            <person name="Coissac E."/>
            <person name="Defoor E."/>
            <person name="Del Bino S."/>
            <person name="Delius H."/>
            <person name="Delneri D."/>
            <person name="de Wergifosse P."/>
            <person name="Dujon B."/>
            <person name="Durand P."/>
            <person name="Entian K.-D."/>
            <person name="Eraso P."/>
            <person name="Escribano V."/>
            <person name="Fabiani L."/>
            <person name="Fartmann B."/>
            <person name="Feroli F."/>
            <person name="Feuermann M."/>
            <person name="Frontali L."/>
            <person name="Garcia-Gonzalez M."/>
            <person name="Garcia-Saez M.I."/>
            <person name="Goffeau A."/>
            <person name="Guerreiro P."/>
            <person name="Hani J."/>
            <person name="Hansen M."/>
            <person name="Hebling U."/>
            <person name="Hernandez K."/>
            <person name="Heumann K."/>
            <person name="Hilger F."/>
            <person name="Hofmann B."/>
            <person name="Indge K.J."/>
            <person name="James C.M."/>
            <person name="Klima R."/>
            <person name="Koetter P."/>
            <person name="Kramer B."/>
            <person name="Kramer W."/>
            <person name="Lauquin G."/>
            <person name="Leuther H."/>
            <person name="Louis E.J."/>
            <person name="Maillier E."/>
            <person name="Marconi A."/>
            <person name="Martegani E."/>
            <person name="Mazon M.J."/>
            <person name="Mazzoni C."/>
            <person name="McReynolds A.D.K."/>
            <person name="Melchioretto P."/>
            <person name="Mewes H.-W."/>
            <person name="Minenkova O."/>
            <person name="Mueller-Auer S."/>
            <person name="Nawrocki A."/>
            <person name="Netter P."/>
            <person name="Neu R."/>
            <person name="Nombela C."/>
            <person name="Oliver S.G."/>
            <person name="Panzeri L."/>
            <person name="Paoluzi S."/>
            <person name="Plevani P."/>
            <person name="Portetelle D."/>
            <person name="Portillo F."/>
            <person name="Potier S."/>
            <person name="Purnelle B."/>
            <person name="Rieger M."/>
            <person name="Riles L."/>
            <person name="Rinaldi T."/>
            <person name="Robben J."/>
            <person name="Rodrigues-Pousada C."/>
            <person name="Rodriguez-Belmonte E."/>
            <person name="Rodriguez-Torres A.M."/>
            <person name="Rose M."/>
            <person name="Ruzzi M."/>
            <person name="Saliola M."/>
            <person name="Sanchez-Perez M."/>
            <person name="Schaefer B."/>
            <person name="Schaefer M."/>
            <person name="Scharfe M."/>
            <person name="Schmidheini T."/>
            <person name="Schreer A."/>
            <person name="Skala J."/>
            <person name="Souciet J.-L."/>
            <person name="Steensma H.Y."/>
            <person name="Talla E."/>
            <person name="Thierry A."/>
            <person name="Vandenbol M."/>
            <person name="van der Aart Q.J.M."/>
            <person name="Van Dyck L."/>
            <person name="Vanoni M."/>
            <person name="Verhasselt P."/>
            <person name="Voet M."/>
            <person name="Volckaert G."/>
            <person name="Wambutt R."/>
            <person name="Watson M.D."/>
            <person name="Weber N."/>
            <person name="Wedler E."/>
            <person name="Wedler H."/>
            <person name="Wipfli P."/>
            <person name="Wolf K."/>
            <person name="Wright L.F."/>
            <person name="Zaccaria P."/>
            <person name="Zimmermann M."/>
            <person name="Zollner A."/>
            <person name="Kleine K."/>
        </authorList>
    </citation>
    <scope>NUCLEOTIDE SEQUENCE [LARGE SCALE GENOMIC DNA]</scope>
    <source>
        <strain>ATCC 204508 / S288c</strain>
    </source>
</reference>
<reference key="4">
    <citation type="journal article" date="2014" name="G3 (Bethesda)">
        <title>The reference genome sequence of Saccharomyces cerevisiae: Then and now.</title>
        <authorList>
            <person name="Engel S.R."/>
            <person name="Dietrich F.S."/>
            <person name="Fisk D.G."/>
            <person name="Binkley G."/>
            <person name="Balakrishnan R."/>
            <person name="Costanzo M.C."/>
            <person name="Dwight S.S."/>
            <person name="Hitz B.C."/>
            <person name="Karra K."/>
            <person name="Nash R.S."/>
            <person name="Weng S."/>
            <person name="Wong E.D."/>
            <person name="Lloyd P."/>
            <person name="Skrzypek M.S."/>
            <person name="Miyasato S.R."/>
            <person name="Simison M."/>
            <person name="Cherry J.M."/>
        </authorList>
    </citation>
    <scope>GENOME REANNOTATION</scope>
    <source>
        <strain>ATCC 204508 / S288c</strain>
    </source>
</reference>
<reference key="5">
    <citation type="journal article" date="2007" name="Genome Res.">
        <title>Approaching a complete repository of sequence-verified protein-encoding clones for Saccharomyces cerevisiae.</title>
        <authorList>
            <person name="Hu Y."/>
            <person name="Rolfs A."/>
            <person name="Bhullar B."/>
            <person name="Murthy T.V.S."/>
            <person name="Zhu C."/>
            <person name="Berger M.F."/>
            <person name="Camargo A.A."/>
            <person name="Kelley F."/>
            <person name="McCarron S."/>
            <person name="Jepson D."/>
            <person name="Richardson A."/>
            <person name="Raphael J."/>
            <person name="Moreira D."/>
            <person name="Taycher E."/>
            <person name="Zuo D."/>
            <person name="Mohr S."/>
            <person name="Kane M.F."/>
            <person name="Williamson J."/>
            <person name="Simpson A.J.G."/>
            <person name="Bulyk M.L."/>
            <person name="Harlow E."/>
            <person name="Marsischky G."/>
            <person name="Kolodner R.D."/>
            <person name="LaBaer J."/>
        </authorList>
    </citation>
    <scope>NUCLEOTIDE SEQUENCE [GENOMIC DNA]</scope>
    <source>
        <strain>ATCC 204508 / S288c</strain>
    </source>
</reference>
<reference key="6">
    <citation type="journal article" date="2001" name="Genes Dev.">
        <title>NHEJ regulation by mating type is exercised through a novel protein, Lif2p, essential to the ligase IV pathway.</title>
        <authorList>
            <person name="Frank-Vaillant M."/>
            <person name="Marcand S."/>
        </authorList>
    </citation>
    <scope>INTERACTION WITH NEJ1</scope>
</reference>
<reference key="7">
    <citation type="journal article" date="2002" name="J. Biol. Chem.">
        <title>A physical and functional interaction between yeast Pol4 and Dnl4-Lif1 links DNA synthesis and ligation in nonhomologous end joining.</title>
        <authorList>
            <person name="Tseng H.-M."/>
            <person name="Tomkinson A.E."/>
        </authorList>
    </citation>
    <scope>INTERACTION OF THE DNL4-LIF1 COMPLEX WITH POL4</scope>
</reference>
<reference key="8">
    <citation type="journal article" date="2003" name="Nature">
        <title>Global analysis of protein localization in budding yeast.</title>
        <authorList>
            <person name="Huh W.-K."/>
            <person name="Falvo J.V."/>
            <person name="Gerke L.C."/>
            <person name="Carroll A.S."/>
            <person name="Howson R.W."/>
            <person name="Weissman J.S."/>
            <person name="O'Shea E.K."/>
        </authorList>
    </citation>
    <scope>SUBCELLULAR LOCATION [LARGE SCALE ANALYSIS]</scope>
</reference>
<reference key="9">
    <citation type="journal article" date="2003" name="Nature">
        <title>Global analysis of protein expression in yeast.</title>
        <authorList>
            <person name="Ghaemmaghami S."/>
            <person name="Huh W.-K."/>
            <person name="Bower K."/>
            <person name="Howson R.W."/>
            <person name="Belle A."/>
            <person name="Dephoure N."/>
            <person name="O'Shea E.K."/>
            <person name="Weissman J.S."/>
        </authorList>
    </citation>
    <scope>LEVEL OF PROTEIN EXPRESSION [LARGE SCALE ANALYSIS]</scope>
</reference>
<reference key="10">
    <citation type="journal article" date="2007" name="DNA Repair">
        <title>Modes of interaction among yeast Nej1, Lif1 and Dnl4 proteins and comparison to human XLF, XRCC4 and Lig4.</title>
        <authorList>
            <person name="Deshpande R.A."/>
            <person name="Wilson T.E."/>
        </authorList>
    </citation>
    <scope>INTERACTION WITH NEJ1 AND DNL4</scope>
</reference>
<reference key="11">
    <citation type="journal article" date="2009" name="Science">
        <title>Global analysis of Cdk1 substrate phosphorylation sites provides insights into evolution.</title>
        <authorList>
            <person name="Holt L.J."/>
            <person name="Tuch B.B."/>
            <person name="Villen J."/>
            <person name="Johnson A.D."/>
            <person name="Gygi S.P."/>
            <person name="Morgan D.O."/>
        </authorList>
    </citation>
    <scope>IDENTIFICATION BY MASS SPECTROMETRY [LARGE SCALE ANALYSIS]</scope>
</reference>
<reference key="12">
    <citation type="journal article" date="2006" name="DNA Repair">
        <title>Structure of an Xrcc4-DNA ligase IV yeast ortholog complex reveals a novel BRCT interaction mode.</title>
        <authorList>
            <person name="Dore A.S."/>
            <person name="Furnham N."/>
            <person name="Davies O.R."/>
            <person name="Sibanda B.L."/>
            <person name="Chirgadze D.Y."/>
            <person name="Jackson S.P."/>
            <person name="Pellegrini L."/>
            <person name="Blundell T.L."/>
        </authorList>
    </citation>
    <scope>X-RAY CRYSTALLOGRAPHY (3.92 ANGSTROMS) OF 1-246 IN COMPLEX WITH THE TANDEM BRCT DOMAINS OF DNL4</scope>
</reference>
<comment type="function">
    <text evidence="8">Involved in non-homologous repair of DNA double-strand breaks (PubMed:9670033). Stabilizes DNL4 (PubMed:9670033).</text>
</comment>
<comment type="subunit">
    <text evidence="2 3 6 7 8">Interacts with DNL4 (via BRCT domain) (PubMed:16388993, PubMed:17567543, PubMed:9670033). Interacts (via N-terminus) with NEJ1 (via C-terminus); the interaction is direct (PubMed:11711435, PubMed:17567543). The DNL4-LIF1 complex interacts with POL4 (PubMed:12235149).</text>
</comment>
<comment type="interaction">
    <interactant intactId="EBI-23865">
        <id>P53150</id>
    </interactant>
    <interactant intactId="EBI-5983">
        <id>Q08387</id>
        <label>DNL4</label>
    </interactant>
    <organismsDiffer>false</organismsDiffer>
    <experiments>3</experiments>
</comment>
<comment type="interaction">
    <interactant intactId="EBI-23865">
        <id>P53150</id>
    </interactant>
    <interactant intactId="EBI-34047">
        <id>Q06148</id>
        <label>NEJ1</label>
    </interactant>
    <organismsDiffer>false</organismsDiffer>
    <experiments>4</experiments>
</comment>
<comment type="subcellular location">
    <subcellularLocation>
        <location evidence="4">Cytoplasm</location>
    </subcellularLocation>
    <subcellularLocation>
        <location evidence="4">Nucleus</location>
    </subcellularLocation>
</comment>
<comment type="miscellaneous">
    <text evidence="5">Present with 876 molecules/cell in log phase SD medium.</text>
</comment>
<comment type="similarity">
    <text evidence="9">Belongs to the XRCC4-XLF family. XLF subfamily.</text>
</comment>
<name>XRCC4_YEAST</name>
<gene>
    <name type="primary">LIF1</name>
    <name type="ordered locus">YGL090W</name>
</gene>
<sequence>MSQLTEFISCIPVVNEEQNEEDERGLCKIQIEDGAMLETLDENSLSGLRIEKMLVSEGTGIFSKSSFGINDLRIFTGENIDEESKKYVWYELLKMLTGHKVYIASLDEKVVFTKWTCRMQDDEVWKVVMELESSAIIRKIAELTLHPVKKGEIDLFEMADKLYKDICCVNDSYRNIKESDSSNRNRVEQLARERELLDKLLETRDERTRAMMVTLLNEKKKKIRELHEILRQNNIKLSDDDVLDSALINTEVQKPISELNSPGKRMKRRKTVVEPQNLQKKLKDTSRRRANRKISNQSVIKMEDDDFDDFQFFGLSKRPIITAKDKLSEKYDDITSFGDDTQSISFESDSSSDVQKHLVSLEDNGIQISAGRSDEDYGDISGSESETDASAGEKKSSNHSEQSGNDREPCLQTESETDIET</sequence>
<evidence type="ECO:0000256" key="1">
    <source>
        <dbReference type="SAM" id="MobiDB-lite"/>
    </source>
</evidence>
<evidence type="ECO:0000269" key="2">
    <source>
    </source>
</evidence>
<evidence type="ECO:0000269" key="3">
    <source>
    </source>
</evidence>
<evidence type="ECO:0000269" key="4">
    <source>
    </source>
</evidence>
<evidence type="ECO:0000269" key="5">
    <source>
    </source>
</evidence>
<evidence type="ECO:0000269" key="6">
    <source>
    </source>
</evidence>
<evidence type="ECO:0000269" key="7">
    <source>
    </source>
</evidence>
<evidence type="ECO:0000269" key="8">
    <source>
    </source>
</evidence>
<evidence type="ECO:0000305" key="9"/>
<proteinExistence type="evidence at protein level"/>
<accession>P53150</accession>
<accession>D6VU55</accession>
<accession>E9P953</accession>
<dbReference type="EMBL" id="Z72612">
    <property type="protein sequence ID" value="CAA96796.1"/>
    <property type="molecule type" value="Genomic_DNA"/>
</dbReference>
<dbReference type="EMBL" id="AY723807">
    <property type="protein sequence ID" value="AAU09724.1"/>
    <property type="molecule type" value="Genomic_DNA"/>
</dbReference>
<dbReference type="EMBL" id="BK006941">
    <property type="protein sequence ID" value="DAA08016.1"/>
    <property type="molecule type" value="Genomic_DNA"/>
</dbReference>
<dbReference type="PIR" id="S64097">
    <property type="entry name" value="S64097"/>
</dbReference>
<dbReference type="RefSeq" id="NP_011425.1">
    <property type="nucleotide sequence ID" value="NM_001180955.1"/>
</dbReference>
<dbReference type="PDB" id="1Z56">
    <property type="method" value="X-ray"/>
    <property type="resolution" value="3.92 A"/>
    <property type="chains" value="A/B=1-246"/>
</dbReference>
<dbReference type="PDBsum" id="1Z56"/>
<dbReference type="SMR" id="P53150"/>
<dbReference type="BioGRID" id="33161">
    <property type="interactions" value="95"/>
</dbReference>
<dbReference type="ComplexPortal" id="CPX-1665">
    <property type="entry name" value="DNA ligase IV complex"/>
</dbReference>
<dbReference type="DIP" id="DIP-5477N"/>
<dbReference type="FunCoup" id="P53150">
    <property type="interactions" value="56"/>
</dbReference>
<dbReference type="IntAct" id="P53150">
    <property type="interactions" value="11"/>
</dbReference>
<dbReference type="MINT" id="P53150"/>
<dbReference type="STRING" id="4932.YGL090W"/>
<dbReference type="iPTMnet" id="P53150"/>
<dbReference type="PaxDb" id="4932-YGL090W"/>
<dbReference type="PeptideAtlas" id="P53150"/>
<dbReference type="EnsemblFungi" id="YGL090W_mRNA">
    <property type="protein sequence ID" value="YGL090W"/>
    <property type="gene ID" value="YGL090W"/>
</dbReference>
<dbReference type="GeneID" id="852790"/>
<dbReference type="KEGG" id="sce:YGL090W"/>
<dbReference type="AGR" id="SGD:S000003058"/>
<dbReference type="SGD" id="S000003058">
    <property type="gene designation" value="LIF1"/>
</dbReference>
<dbReference type="VEuPathDB" id="FungiDB:YGL090W"/>
<dbReference type="eggNOG" id="ENOG502S010">
    <property type="taxonomic scope" value="Eukaryota"/>
</dbReference>
<dbReference type="HOGENOM" id="CLU_053373_0_0_1"/>
<dbReference type="InParanoid" id="P53150"/>
<dbReference type="OMA" id="EFICCVP"/>
<dbReference type="OrthoDB" id="4067005at2759"/>
<dbReference type="BioCyc" id="YEAST:G3O-30590-MONOMER"/>
<dbReference type="BioGRID-ORCS" id="852790">
    <property type="hits" value="0 hits in 10 CRISPR screens"/>
</dbReference>
<dbReference type="EvolutionaryTrace" id="P53150"/>
<dbReference type="PRO" id="PR:P53150"/>
<dbReference type="Proteomes" id="UP000002311">
    <property type="component" value="Chromosome VII"/>
</dbReference>
<dbReference type="RNAct" id="P53150">
    <property type="molecule type" value="protein"/>
</dbReference>
<dbReference type="GO" id="GO:0000785">
    <property type="term" value="C:chromatin"/>
    <property type="evidence" value="ECO:0000314"/>
    <property type="project" value="SGD"/>
</dbReference>
<dbReference type="GO" id="GO:0005737">
    <property type="term" value="C:cytoplasm"/>
    <property type="evidence" value="ECO:0007669"/>
    <property type="project" value="UniProtKB-SubCell"/>
</dbReference>
<dbReference type="GO" id="GO:0032807">
    <property type="term" value="C:DNA ligase IV complex"/>
    <property type="evidence" value="ECO:0000353"/>
    <property type="project" value="ComplexPortal"/>
</dbReference>
<dbReference type="GO" id="GO:0005634">
    <property type="term" value="C:nucleus"/>
    <property type="evidence" value="ECO:0000314"/>
    <property type="project" value="SGD"/>
</dbReference>
<dbReference type="GO" id="GO:0003682">
    <property type="term" value="F:chromatin binding"/>
    <property type="evidence" value="ECO:0000314"/>
    <property type="project" value="SGD"/>
</dbReference>
<dbReference type="GO" id="GO:0006303">
    <property type="term" value="P:double-strand break repair via nonhomologous end joining"/>
    <property type="evidence" value="ECO:0000314"/>
    <property type="project" value="ComplexPortal"/>
</dbReference>
<dbReference type="Gene3D" id="1.20.5.370">
    <property type="match status" value="1"/>
</dbReference>
<dbReference type="InterPro" id="IPR014751">
    <property type="entry name" value="XRCC4-like_C"/>
</dbReference>
<dbReference type="SUPFAM" id="SSF58022">
    <property type="entry name" value="XRCC4, C-terminal oligomerization domain"/>
    <property type="match status" value="1"/>
</dbReference>
<protein>
    <recommendedName>
        <fullName evidence="9">Non-homologous end-joining factor LIF1</fullName>
    </recommendedName>
    <alternativeName>
        <fullName evidence="9">Ligase-interacting factor 1</fullName>
    </alternativeName>
</protein>
<keyword id="KW-0002">3D-structure</keyword>
<keyword id="KW-0963">Cytoplasm</keyword>
<keyword id="KW-0227">DNA damage</keyword>
<keyword id="KW-0234">DNA repair</keyword>
<keyword id="KW-0539">Nucleus</keyword>
<keyword id="KW-1185">Reference proteome</keyword>
<organism>
    <name type="scientific">Saccharomyces cerevisiae (strain ATCC 204508 / S288c)</name>
    <name type="common">Baker's yeast</name>
    <dbReference type="NCBI Taxonomy" id="559292"/>
    <lineage>
        <taxon>Eukaryota</taxon>
        <taxon>Fungi</taxon>
        <taxon>Dikarya</taxon>
        <taxon>Ascomycota</taxon>
        <taxon>Saccharomycotina</taxon>
        <taxon>Saccharomycetes</taxon>
        <taxon>Saccharomycetales</taxon>
        <taxon>Saccharomycetaceae</taxon>
        <taxon>Saccharomyces</taxon>
    </lineage>
</organism>
<feature type="chain" id="PRO_0000084419" description="Non-homologous end-joining factor LIF1">
    <location>
        <begin position="1"/>
        <end position="421"/>
    </location>
</feature>
<feature type="region of interest" description="Interaction with NEJ1" evidence="7">
    <location>
        <begin position="1"/>
        <end position="196"/>
    </location>
</feature>
<feature type="region of interest" description="Disordered" evidence="1">
    <location>
        <begin position="365"/>
        <end position="421"/>
    </location>
</feature>
<feature type="compositionally biased region" description="Basic and acidic residues" evidence="1">
    <location>
        <begin position="391"/>
        <end position="409"/>
    </location>
</feature>
<feature type="sequence conflict" description="In Ref. 5; AAU09724." evidence="9" ref="5">
    <original>S</original>
    <variation>G</variation>
    <location>
        <position position="44"/>
    </location>
</feature>